<comment type="function">
    <text evidence="1">This protein is one of the early assembly proteins of the 50S ribosomal subunit, although it is not seen to bind rRNA by itself. It is important during the early stages of 50S assembly.</text>
</comment>
<comment type="subunit">
    <text evidence="1">Part of the 50S ribosomal subunit.</text>
</comment>
<comment type="similarity">
    <text evidence="1">Belongs to the universal ribosomal protein uL13 family.</text>
</comment>
<keyword id="KW-0687">Ribonucleoprotein</keyword>
<keyword id="KW-0689">Ribosomal protein</keyword>
<proteinExistence type="inferred from homology"/>
<sequence>MRTYTPKPGDINRQWHVIDATDVVLGRLASQTATLLRGKHKPTFASHMDMGDFVIIINAEKVALTGAKLEQKRAYRHSGYPGGLTSVNYAELLESNPVRAVEKAIKGMLPKNSLAAQQLGKLKVYAGPEHPHAAQQPKTFEITQVAQ</sequence>
<gene>
    <name evidence="1" type="primary">rplM</name>
    <name type="ordered locus">AAur_2905</name>
</gene>
<evidence type="ECO:0000255" key="1">
    <source>
        <dbReference type="HAMAP-Rule" id="MF_01366"/>
    </source>
</evidence>
<evidence type="ECO:0000305" key="2"/>
<protein>
    <recommendedName>
        <fullName evidence="1">Large ribosomal subunit protein uL13</fullName>
    </recommendedName>
    <alternativeName>
        <fullName evidence="2">50S ribosomal protein L13</fullName>
    </alternativeName>
</protein>
<feature type="chain" id="PRO_1000055339" description="Large ribosomal subunit protein uL13">
    <location>
        <begin position="1"/>
        <end position="147"/>
    </location>
</feature>
<accession>A1R8Q2</accession>
<reference key="1">
    <citation type="journal article" date="2006" name="PLoS Genet.">
        <title>Secrets of soil survival revealed by the genome sequence of Arthrobacter aurescens TC1.</title>
        <authorList>
            <person name="Mongodin E.F."/>
            <person name="Shapir N."/>
            <person name="Daugherty S.C."/>
            <person name="DeBoy R.T."/>
            <person name="Emerson J.B."/>
            <person name="Shvartzbeyn A."/>
            <person name="Radune D."/>
            <person name="Vamathevan J."/>
            <person name="Riggs F."/>
            <person name="Grinberg V."/>
            <person name="Khouri H.M."/>
            <person name="Wackett L.P."/>
            <person name="Nelson K.E."/>
            <person name="Sadowsky M.J."/>
        </authorList>
    </citation>
    <scope>NUCLEOTIDE SEQUENCE [LARGE SCALE GENOMIC DNA]</scope>
    <source>
        <strain>TC1</strain>
    </source>
</reference>
<name>RL13_PAEAT</name>
<organism>
    <name type="scientific">Paenarthrobacter aurescens (strain TC1)</name>
    <dbReference type="NCBI Taxonomy" id="290340"/>
    <lineage>
        <taxon>Bacteria</taxon>
        <taxon>Bacillati</taxon>
        <taxon>Actinomycetota</taxon>
        <taxon>Actinomycetes</taxon>
        <taxon>Micrococcales</taxon>
        <taxon>Micrococcaceae</taxon>
        <taxon>Paenarthrobacter</taxon>
    </lineage>
</organism>
<dbReference type="EMBL" id="CP000474">
    <property type="protein sequence ID" value="ABM09180.1"/>
    <property type="molecule type" value="Genomic_DNA"/>
</dbReference>
<dbReference type="RefSeq" id="WP_011775554.1">
    <property type="nucleotide sequence ID" value="NC_008711.1"/>
</dbReference>
<dbReference type="SMR" id="A1R8Q2"/>
<dbReference type="STRING" id="290340.AAur_2905"/>
<dbReference type="GeneID" id="97301750"/>
<dbReference type="KEGG" id="aau:AAur_2905"/>
<dbReference type="eggNOG" id="COG0102">
    <property type="taxonomic scope" value="Bacteria"/>
</dbReference>
<dbReference type="HOGENOM" id="CLU_082184_2_2_11"/>
<dbReference type="OrthoDB" id="9801330at2"/>
<dbReference type="Proteomes" id="UP000000637">
    <property type="component" value="Chromosome"/>
</dbReference>
<dbReference type="GO" id="GO:0022625">
    <property type="term" value="C:cytosolic large ribosomal subunit"/>
    <property type="evidence" value="ECO:0007669"/>
    <property type="project" value="TreeGrafter"/>
</dbReference>
<dbReference type="GO" id="GO:0003729">
    <property type="term" value="F:mRNA binding"/>
    <property type="evidence" value="ECO:0007669"/>
    <property type="project" value="TreeGrafter"/>
</dbReference>
<dbReference type="GO" id="GO:0003735">
    <property type="term" value="F:structural constituent of ribosome"/>
    <property type="evidence" value="ECO:0007669"/>
    <property type="project" value="InterPro"/>
</dbReference>
<dbReference type="GO" id="GO:0017148">
    <property type="term" value="P:negative regulation of translation"/>
    <property type="evidence" value="ECO:0007669"/>
    <property type="project" value="TreeGrafter"/>
</dbReference>
<dbReference type="GO" id="GO:0006412">
    <property type="term" value="P:translation"/>
    <property type="evidence" value="ECO:0007669"/>
    <property type="project" value="UniProtKB-UniRule"/>
</dbReference>
<dbReference type="CDD" id="cd00392">
    <property type="entry name" value="Ribosomal_L13"/>
    <property type="match status" value="1"/>
</dbReference>
<dbReference type="FunFam" id="3.90.1180.10:FF:000001">
    <property type="entry name" value="50S ribosomal protein L13"/>
    <property type="match status" value="1"/>
</dbReference>
<dbReference type="Gene3D" id="3.90.1180.10">
    <property type="entry name" value="Ribosomal protein L13"/>
    <property type="match status" value="1"/>
</dbReference>
<dbReference type="HAMAP" id="MF_01366">
    <property type="entry name" value="Ribosomal_uL13"/>
    <property type="match status" value="1"/>
</dbReference>
<dbReference type="InterPro" id="IPR005822">
    <property type="entry name" value="Ribosomal_uL13"/>
</dbReference>
<dbReference type="InterPro" id="IPR005823">
    <property type="entry name" value="Ribosomal_uL13_bac-type"/>
</dbReference>
<dbReference type="InterPro" id="IPR036899">
    <property type="entry name" value="Ribosomal_uL13_sf"/>
</dbReference>
<dbReference type="NCBIfam" id="TIGR01066">
    <property type="entry name" value="rplM_bact"/>
    <property type="match status" value="1"/>
</dbReference>
<dbReference type="PANTHER" id="PTHR11545:SF2">
    <property type="entry name" value="LARGE RIBOSOMAL SUBUNIT PROTEIN UL13M"/>
    <property type="match status" value="1"/>
</dbReference>
<dbReference type="PANTHER" id="PTHR11545">
    <property type="entry name" value="RIBOSOMAL PROTEIN L13"/>
    <property type="match status" value="1"/>
</dbReference>
<dbReference type="Pfam" id="PF00572">
    <property type="entry name" value="Ribosomal_L13"/>
    <property type="match status" value="1"/>
</dbReference>
<dbReference type="PIRSF" id="PIRSF002181">
    <property type="entry name" value="Ribosomal_L13"/>
    <property type="match status" value="1"/>
</dbReference>
<dbReference type="SUPFAM" id="SSF52161">
    <property type="entry name" value="Ribosomal protein L13"/>
    <property type="match status" value="1"/>
</dbReference>